<evidence type="ECO:0000255" key="1">
    <source>
        <dbReference type="HAMAP-Rule" id="MF_01201"/>
    </source>
</evidence>
<feature type="chain" id="PRO_1000066032" description="Alanine racemase">
    <location>
        <begin position="1"/>
        <end position="368"/>
    </location>
</feature>
<feature type="active site" description="Proton acceptor; specific for D-alanine" evidence="1">
    <location>
        <position position="35"/>
    </location>
</feature>
<feature type="active site" description="Proton acceptor; specific for L-alanine" evidence="1">
    <location>
        <position position="253"/>
    </location>
</feature>
<feature type="binding site" evidence="1">
    <location>
        <position position="130"/>
    </location>
    <ligand>
        <name>substrate</name>
    </ligand>
</feature>
<feature type="binding site" evidence="1">
    <location>
        <position position="305"/>
    </location>
    <ligand>
        <name>substrate</name>
    </ligand>
</feature>
<feature type="modified residue" description="N6-(pyridoxal phosphate)lysine" evidence="1">
    <location>
        <position position="35"/>
    </location>
</feature>
<proteinExistence type="inferred from homology"/>
<protein>
    <recommendedName>
        <fullName evidence="1">Alanine racemase</fullName>
        <ecNumber evidence="1">5.1.1.1</ecNumber>
    </recommendedName>
</protein>
<reference key="1">
    <citation type="journal article" date="2010" name="PLoS ONE">
        <title>The complete genome sequence of Cupriavidus metallidurans strain CH34, a master survivalist in harsh and anthropogenic environments.</title>
        <authorList>
            <person name="Janssen P.J."/>
            <person name="Van Houdt R."/>
            <person name="Moors H."/>
            <person name="Monsieurs P."/>
            <person name="Morin N."/>
            <person name="Michaux A."/>
            <person name="Benotmane M.A."/>
            <person name="Leys N."/>
            <person name="Vallaeys T."/>
            <person name="Lapidus A."/>
            <person name="Monchy S."/>
            <person name="Medigue C."/>
            <person name="Taghavi S."/>
            <person name="McCorkle S."/>
            <person name="Dunn J."/>
            <person name="van der Lelie D."/>
            <person name="Mergeay M."/>
        </authorList>
    </citation>
    <scope>NUCLEOTIDE SEQUENCE [LARGE SCALE GENOMIC DNA]</scope>
    <source>
        <strain>ATCC 43123 / DSM 2839 / NBRC 102507 / CH34</strain>
    </source>
</reference>
<gene>
    <name type="primary">alr</name>
    <name type="ordered locus">Rmet_1400</name>
</gene>
<organism>
    <name type="scientific">Cupriavidus metallidurans (strain ATCC 43123 / DSM 2839 / NBRC 102507 / CH34)</name>
    <name type="common">Ralstonia metallidurans</name>
    <dbReference type="NCBI Taxonomy" id="266264"/>
    <lineage>
        <taxon>Bacteria</taxon>
        <taxon>Pseudomonadati</taxon>
        <taxon>Pseudomonadota</taxon>
        <taxon>Betaproteobacteria</taxon>
        <taxon>Burkholderiales</taxon>
        <taxon>Burkholderiaceae</taxon>
        <taxon>Cupriavidus</taxon>
    </lineage>
</organism>
<sequence>MPRPIQAVIHQPALANNLEVVRRQAPASRIWAVVKANAYGHGIRRVFAGLKAADGFGLLDLSEAVLLRDLGWQGPILLLEGIFQAQDVPLLEQYRLTTAVHCEEQLRMLELARPKGPLAIQLKLNTGMNRLGFRPAQYRAAWERARTMSCIGSIVHMTHFSDADSKRGIAHQVEAFEAATANLPGEVSMANSAAVLWHPQAHRNWVRPGIILYGGSPTGVSSDIAETGLQPAMSLHSELIGIQDLQPGDTVGYGSMFTADRAMRVGVVACGYADGYPRHAVGWGERRAPVLVDGVRTQLVGRVSMDMICVDLTPCPKAKVGTPVTLWGHGLPIDDVAAASGTVGYELMCALAPRVPTSVATLTTADAV</sequence>
<accession>Q1LNJ3</accession>
<name>ALR_CUPMC</name>
<dbReference type="EC" id="5.1.1.1" evidence="1"/>
<dbReference type="EMBL" id="CP000352">
    <property type="protein sequence ID" value="ABF08283.1"/>
    <property type="molecule type" value="Genomic_DNA"/>
</dbReference>
<dbReference type="RefSeq" id="WP_011516157.1">
    <property type="nucleotide sequence ID" value="NC_007973.1"/>
</dbReference>
<dbReference type="SMR" id="Q1LNJ3"/>
<dbReference type="STRING" id="266264.Rmet_1400"/>
<dbReference type="KEGG" id="rme:Rmet_1400"/>
<dbReference type="eggNOG" id="COG0787">
    <property type="taxonomic scope" value="Bacteria"/>
</dbReference>
<dbReference type="HOGENOM" id="CLU_028393_1_0_4"/>
<dbReference type="UniPathway" id="UPA00042">
    <property type="reaction ID" value="UER00497"/>
</dbReference>
<dbReference type="Proteomes" id="UP000002429">
    <property type="component" value="Chromosome"/>
</dbReference>
<dbReference type="GO" id="GO:0005829">
    <property type="term" value="C:cytosol"/>
    <property type="evidence" value="ECO:0007669"/>
    <property type="project" value="TreeGrafter"/>
</dbReference>
<dbReference type="GO" id="GO:0008784">
    <property type="term" value="F:alanine racemase activity"/>
    <property type="evidence" value="ECO:0007669"/>
    <property type="project" value="UniProtKB-UniRule"/>
</dbReference>
<dbReference type="GO" id="GO:0030170">
    <property type="term" value="F:pyridoxal phosphate binding"/>
    <property type="evidence" value="ECO:0007669"/>
    <property type="project" value="UniProtKB-UniRule"/>
</dbReference>
<dbReference type="GO" id="GO:0030632">
    <property type="term" value="P:D-alanine biosynthetic process"/>
    <property type="evidence" value="ECO:0007669"/>
    <property type="project" value="UniProtKB-UniRule"/>
</dbReference>
<dbReference type="CDD" id="cd06827">
    <property type="entry name" value="PLPDE_III_AR_proteobact"/>
    <property type="match status" value="1"/>
</dbReference>
<dbReference type="FunFam" id="3.20.20.10:FF:000002">
    <property type="entry name" value="Alanine racemase"/>
    <property type="match status" value="1"/>
</dbReference>
<dbReference type="Gene3D" id="3.20.20.10">
    <property type="entry name" value="Alanine racemase"/>
    <property type="match status" value="1"/>
</dbReference>
<dbReference type="Gene3D" id="2.40.37.10">
    <property type="entry name" value="Lyase, Ornithine Decarboxylase, Chain A, domain 1"/>
    <property type="match status" value="1"/>
</dbReference>
<dbReference type="HAMAP" id="MF_01201">
    <property type="entry name" value="Ala_racemase"/>
    <property type="match status" value="1"/>
</dbReference>
<dbReference type="InterPro" id="IPR000821">
    <property type="entry name" value="Ala_racemase"/>
</dbReference>
<dbReference type="InterPro" id="IPR009006">
    <property type="entry name" value="Ala_racemase/Decarboxylase_C"/>
</dbReference>
<dbReference type="InterPro" id="IPR011079">
    <property type="entry name" value="Ala_racemase_C"/>
</dbReference>
<dbReference type="InterPro" id="IPR001608">
    <property type="entry name" value="Ala_racemase_N"/>
</dbReference>
<dbReference type="InterPro" id="IPR020622">
    <property type="entry name" value="Ala_racemase_pyridoxalP-BS"/>
</dbReference>
<dbReference type="InterPro" id="IPR029066">
    <property type="entry name" value="PLP-binding_barrel"/>
</dbReference>
<dbReference type="NCBIfam" id="TIGR00492">
    <property type="entry name" value="alr"/>
    <property type="match status" value="1"/>
</dbReference>
<dbReference type="PANTHER" id="PTHR30511">
    <property type="entry name" value="ALANINE RACEMASE"/>
    <property type="match status" value="1"/>
</dbReference>
<dbReference type="PANTHER" id="PTHR30511:SF0">
    <property type="entry name" value="ALANINE RACEMASE, CATABOLIC-RELATED"/>
    <property type="match status" value="1"/>
</dbReference>
<dbReference type="Pfam" id="PF00842">
    <property type="entry name" value="Ala_racemase_C"/>
    <property type="match status" value="1"/>
</dbReference>
<dbReference type="Pfam" id="PF01168">
    <property type="entry name" value="Ala_racemase_N"/>
    <property type="match status" value="1"/>
</dbReference>
<dbReference type="PRINTS" id="PR00992">
    <property type="entry name" value="ALARACEMASE"/>
</dbReference>
<dbReference type="SMART" id="SM01005">
    <property type="entry name" value="Ala_racemase_C"/>
    <property type="match status" value="1"/>
</dbReference>
<dbReference type="SUPFAM" id="SSF50621">
    <property type="entry name" value="Alanine racemase C-terminal domain-like"/>
    <property type="match status" value="1"/>
</dbReference>
<dbReference type="SUPFAM" id="SSF51419">
    <property type="entry name" value="PLP-binding barrel"/>
    <property type="match status" value="1"/>
</dbReference>
<dbReference type="PROSITE" id="PS00395">
    <property type="entry name" value="ALANINE_RACEMASE"/>
    <property type="match status" value="1"/>
</dbReference>
<comment type="function">
    <text evidence="1">Catalyzes the interconversion of L-alanine and D-alanine. May also act on other amino acids.</text>
</comment>
<comment type="catalytic activity">
    <reaction evidence="1">
        <text>L-alanine = D-alanine</text>
        <dbReference type="Rhea" id="RHEA:20249"/>
        <dbReference type="ChEBI" id="CHEBI:57416"/>
        <dbReference type="ChEBI" id="CHEBI:57972"/>
        <dbReference type="EC" id="5.1.1.1"/>
    </reaction>
</comment>
<comment type="cofactor">
    <cofactor evidence="1">
        <name>pyridoxal 5'-phosphate</name>
        <dbReference type="ChEBI" id="CHEBI:597326"/>
    </cofactor>
</comment>
<comment type="pathway">
    <text evidence="1">Amino-acid biosynthesis; D-alanine biosynthesis; D-alanine from L-alanine: step 1/1.</text>
</comment>
<comment type="similarity">
    <text evidence="1">Belongs to the alanine racemase family.</text>
</comment>
<keyword id="KW-0413">Isomerase</keyword>
<keyword id="KW-0663">Pyridoxal phosphate</keyword>
<keyword id="KW-1185">Reference proteome</keyword>